<name>YBCO_BP82</name>
<dbReference type="EC" id="3.1.-.-"/>
<dbReference type="EMBL" id="X92588">
    <property type="protein sequence ID" value="CAA63329.1"/>
    <property type="molecule type" value="Genomic_DNA"/>
</dbReference>
<dbReference type="PIR" id="S66582">
    <property type="entry name" value="S66582"/>
</dbReference>
<dbReference type="SMR" id="P68662"/>
<dbReference type="GO" id="GO:0046872">
    <property type="term" value="F:metal ion binding"/>
    <property type="evidence" value="ECO:0007669"/>
    <property type="project" value="UniProtKB-KW"/>
</dbReference>
<dbReference type="GO" id="GO:0004518">
    <property type="term" value="F:nuclease activity"/>
    <property type="evidence" value="ECO:0007669"/>
    <property type="project" value="UniProtKB-KW"/>
</dbReference>
<dbReference type="Gene3D" id="3.30.50.20">
    <property type="entry name" value="prophage-derive protein ybcO"/>
    <property type="match status" value="1"/>
</dbReference>
<dbReference type="InterPro" id="IPR010774">
    <property type="entry name" value="YbcO"/>
</dbReference>
<dbReference type="Pfam" id="PF07102">
    <property type="entry name" value="YbcO"/>
    <property type="match status" value="1"/>
</dbReference>
<reference key="1">
    <citation type="journal article" date="1996" name="J. Mol. Biol.">
        <title>Holliday junction resolvases encoded by homologous rusA genes in Escherichia coli K-12 and phage 82.</title>
        <authorList>
            <person name="Mahdi A.A."/>
            <person name="Sharples G.J."/>
            <person name="Mandal T.N."/>
            <person name="Lloyd R.G."/>
        </authorList>
    </citation>
    <scope>NUCLEOTIDE SEQUENCE [GENOMIC DNA]</scope>
</reference>
<evidence type="ECO:0000250" key="1">
    <source>
        <dbReference type="UniProtKB" id="P68661"/>
    </source>
</evidence>
<evidence type="ECO:0000305" key="2"/>
<comment type="function">
    <text evidence="1">Based on its fold and a conserved His residue, has been predicted to be a nuclease.</text>
</comment>
<comment type="similarity">
    <text evidence="2">Belongs to the YbcO family.</text>
</comment>
<sequence length="96" mass="10348">MADLRKAARGRECQVRIPGVCNGNPETSVLAHIRLTGLCGTGTKPPDLIATIACSACHDEIDRRTHFVDAGYAKECALEGMARTQVIWLKEGVIKA</sequence>
<organismHost>
    <name type="scientific">Escherichia coli</name>
    <dbReference type="NCBI Taxonomy" id="562"/>
</organismHost>
<protein>
    <recommendedName>
        <fullName>Putative nuclease ybcO</fullName>
        <ecNumber>3.1.-.-</ecNumber>
    </recommendedName>
</protein>
<gene>
    <name type="primary">ybcO</name>
</gene>
<organism>
    <name type="scientific">Enterobacteria phage 82</name>
    <name type="common">Bacteriophage 82</name>
    <dbReference type="NCBI Taxonomy" id="10705"/>
    <lineage>
        <taxon>Viruses</taxon>
        <taxon>Duplodnaviria</taxon>
        <taxon>Heunggongvirae</taxon>
        <taxon>Uroviricota</taxon>
        <taxon>Caudoviricetes</taxon>
        <taxon>Lambdavirus</taxon>
    </lineage>
</organism>
<feature type="chain" id="PRO_0000168655" description="Putative nuclease ybcO">
    <location>
        <begin position="1"/>
        <end position="96"/>
    </location>
</feature>
<feature type="active site" description="Proton acceptor" evidence="1">
    <location>
        <position position="32"/>
    </location>
</feature>
<feature type="binding site" evidence="1">
    <location>
        <position position="13"/>
    </location>
    <ligand>
        <name>Zn(2+)</name>
        <dbReference type="ChEBI" id="CHEBI:29105"/>
    </ligand>
</feature>
<feature type="binding site" evidence="1">
    <location>
        <position position="21"/>
    </location>
    <ligand>
        <name>Zn(2+)</name>
        <dbReference type="ChEBI" id="CHEBI:29105"/>
    </ligand>
</feature>
<feature type="binding site" evidence="1">
    <location>
        <position position="54"/>
    </location>
    <ligand>
        <name>Zn(2+)</name>
        <dbReference type="ChEBI" id="CHEBI:29105"/>
    </ligand>
</feature>
<feature type="binding site" evidence="1">
    <location>
        <position position="57"/>
    </location>
    <ligand>
        <name>Zn(2+)</name>
        <dbReference type="ChEBI" id="CHEBI:29105"/>
    </ligand>
</feature>
<accession>P68662</accession>
<accession>Q37872</accession>
<accession>Q47271</accession>
<proteinExistence type="inferred from homology"/>
<keyword id="KW-0378">Hydrolase</keyword>
<keyword id="KW-0479">Metal-binding</keyword>
<keyword id="KW-0540">Nuclease</keyword>
<keyword id="KW-0862">Zinc</keyword>